<organism>
    <name type="scientific">Meyerozyma guilliermondii (strain ATCC 6260 / CBS 566 / DSM 6381 / JCM 1539 / NBRC 10279 / NRRL Y-324)</name>
    <name type="common">Yeast</name>
    <name type="synonym">Candida guilliermondii</name>
    <dbReference type="NCBI Taxonomy" id="294746"/>
    <lineage>
        <taxon>Eukaryota</taxon>
        <taxon>Fungi</taxon>
        <taxon>Dikarya</taxon>
        <taxon>Ascomycota</taxon>
        <taxon>Saccharomycotina</taxon>
        <taxon>Pichiomycetes</taxon>
        <taxon>Debaryomycetaceae</taxon>
        <taxon>Meyerozyma</taxon>
    </lineage>
</organism>
<keyword id="KW-0963">Cytoplasm</keyword>
<keyword id="KW-0507">mRNA processing</keyword>
<keyword id="KW-0508">mRNA splicing</keyword>
<keyword id="KW-0539">Nucleus</keyword>
<keyword id="KW-1185">Reference proteome</keyword>
<gene>
    <name type="primary">SQS1</name>
    <name type="ORF">PGUG_01659</name>
</gene>
<accession>A5DEF8</accession>
<name>SQS1_PICGU</name>
<protein>
    <recommendedName>
        <fullName>Protein SQS1</fullName>
    </recommendedName>
</protein>
<reference key="1">
    <citation type="journal article" date="2009" name="Nature">
        <title>Evolution of pathogenicity and sexual reproduction in eight Candida genomes.</title>
        <authorList>
            <person name="Butler G."/>
            <person name="Rasmussen M.D."/>
            <person name="Lin M.F."/>
            <person name="Santos M.A.S."/>
            <person name="Sakthikumar S."/>
            <person name="Munro C.A."/>
            <person name="Rheinbay E."/>
            <person name="Grabherr M."/>
            <person name="Forche A."/>
            <person name="Reedy J.L."/>
            <person name="Agrafioti I."/>
            <person name="Arnaud M.B."/>
            <person name="Bates S."/>
            <person name="Brown A.J.P."/>
            <person name="Brunke S."/>
            <person name="Costanzo M.C."/>
            <person name="Fitzpatrick D.A."/>
            <person name="de Groot P.W.J."/>
            <person name="Harris D."/>
            <person name="Hoyer L.L."/>
            <person name="Hube B."/>
            <person name="Klis F.M."/>
            <person name="Kodira C."/>
            <person name="Lennard N."/>
            <person name="Logue M.E."/>
            <person name="Martin R."/>
            <person name="Neiman A.M."/>
            <person name="Nikolaou E."/>
            <person name="Quail M.A."/>
            <person name="Quinn J."/>
            <person name="Santos M.C."/>
            <person name="Schmitzberger F.F."/>
            <person name="Sherlock G."/>
            <person name="Shah P."/>
            <person name="Silverstein K.A.T."/>
            <person name="Skrzypek M.S."/>
            <person name="Soll D."/>
            <person name="Staggs R."/>
            <person name="Stansfield I."/>
            <person name="Stumpf M.P.H."/>
            <person name="Sudbery P.E."/>
            <person name="Srikantha T."/>
            <person name="Zeng Q."/>
            <person name="Berman J."/>
            <person name="Berriman M."/>
            <person name="Heitman J."/>
            <person name="Gow N.A.R."/>
            <person name="Lorenz M.C."/>
            <person name="Birren B.W."/>
            <person name="Kellis M."/>
            <person name="Cuomo C.A."/>
        </authorList>
    </citation>
    <scope>NUCLEOTIDE SEQUENCE [LARGE SCALE GENOMIC DNA]</scope>
    <source>
        <strain>ATCC 6260 / CBS 566 / DSM 6381 / JCM 1539 / NBRC 10279 / NRRL Y-324</strain>
    </source>
</reference>
<dbReference type="EMBL" id="CH408156">
    <property type="protein sequence ID" value="EDK37560.2"/>
    <property type="status" value="ALT_INIT"/>
    <property type="molecule type" value="Genomic_DNA"/>
</dbReference>
<dbReference type="RefSeq" id="XP_001485987.1">
    <property type="nucleotide sequence ID" value="XM_001485937.1"/>
</dbReference>
<dbReference type="SMR" id="A5DEF8"/>
<dbReference type="FunCoup" id="A5DEF8">
    <property type="interactions" value="258"/>
</dbReference>
<dbReference type="STRING" id="294746.A5DEF8"/>
<dbReference type="GeneID" id="5127480"/>
<dbReference type="KEGG" id="pgu:PGUG_01659"/>
<dbReference type="eggNOG" id="KOG0154">
    <property type="taxonomic scope" value="Eukaryota"/>
</dbReference>
<dbReference type="HOGENOM" id="CLU_021974_1_0_1"/>
<dbReference type="InParanoid" id="A5DEF8"/>
<dbReference type="OrthoDB" id="21470at2759"/>
<dbReference type="Proteomes" id="UP000001997">
    <property type="component" value="Unassembled WGS sequence"/>
</dbReference>
<dbReference type="GO" id="GO:0005737">
    <property type="term" value="C:cytoplasm"/>
    <property type="evidence" value="ECO:0007669"/>
    <property type="project" value="UniProtKB-SubCell"/>
</dbReference>
<dbReference type="GO" id="GO:0005634">
    <property type="term" value="C:nucleus"/>
    <property type="evidence" value="ECO:0007669"/>
    <property type="project" value="UniProtKB-SubCell"/>
</dbReference>
<dbReference type="GO" id="GO:0003676">
    <property type="term" value="F:nucleic acid binding"/>
    <property type="evidence" value="ECO:0007669"/>
    <property type="project" value="InterPro"/>
</dbReference>
<dbReference type="GO" id="GO:0006397">
    <property type="term" value="P:mRNA processing"/>
    <property type="evidence" value="ECO:0007669"/>
    <property type="project" value="UniProtKB-KW"/>
</dbReference>
<dbReference type="GO" id="GO:0008380">
    <property type="term" value="P:RNA splicing"/>
    <property type="evidence" value="ECO:0007669"/>
    <property type="project" value="UniProtKB-KW"/>
</dbReference>
<dbReference type="CDD" id="cd02646">
    <property type="entry name" value="R3H_G-patch"/>
    <property type="match status" value="1"/>
</dbReference>
<dbReference type="Gene3D" id="3.30.1370.50">
    <property type="entry name" value="R3H-like domain"/>
    <property type="match status" value="1"/>
</dbReference>
<dbReference type="InterPro" id="IPR000467">
    <property type="entry name" value="G_patch_dom"/>
</dbReference>
<dbReference type="InterPro" id="IPR001374">
    <property type="entry name" value="R3H_dom"/>
</dbReference>
<dbReference type="InterPro" id="IPR036867">
    <property type="entry name" value="R3H_dom_sf"/>
</dbReference>
<dbReference type="InterPro" id="IPR034082">
    <property type="entry name" value="R3H_G-patch"/>
</dbReference>
<dbReference type="InterPro" id="IPR051189">
    <property type="entry name" value="Splicing_assoc_domain"/>
</dbReference>
<dbReference type="PANTHER" id="PTHR14195">
    <property type="entry name" value="G PATCH DOMAIN CONTAINING PROTEIN 2"/>
    <property type="match status" value="1"/>
</dbReference>
<dbReference type="Pfam" id="PF01585">
    <property type="entry name" value="G-patch"/>
    <property type="match status" value="1"/>
</dbReference>
<dbReference type="SMART" id="SM00443">
    <property type="entry name" value="G_patch"/>
    <property type="match status" value="1"/>
</dbReference>
<dbReference type="SUPFAM" id="SSF82708">
    <property type="entry name" value="R3H domain"/>
    <property type="match status" value="1"/>
</dbReference>
<dbReference type="PROSITE" id="PS50174">
    <property type="entry name" value="G_PATCH"/>
    <property type="match status" value="1"/>
</dbReference>
<dbReference type="PROSITE" id="PS51061">
    <property type="entry name" value="R3H"/>
    <property type="match status" value="1"/>
</dbReference>
<sequence length="749" mass="84022">MARGNRRNGSRRGSGTTGSSGSSRGRNNKNRGRGGSSSTSRRAANGGKRAGAGKFNAPELMDLDFGAIDDVNMGTGSMRSLSKRPGRNTMMQEAFLTSKHTDRFVGEPLRKRPIEFIKAKEVYDPRAILEKVINKDEANDADEATDITVSLRETTIAEQNEDNVNLDHDENEKENEKEDVEDQKPVEKDEESKDNLEGLREAIENDEKVKSAKIDDETLEQPTIEMEDSDNEDDSQSDSEGFFIDTSAQPTNSPPAYVPPNDIGPNIDYDPVLTIGNVQLHTSGAGNDITASVRSSTHHDELDSLDEFSDSESDEDAYADYIRQLNEQDSSEELSSSDSENESASTDANVSSTNSPQIVEYGFLSEDYEFDVSQISVTNVRFGIKNQFYSRCLELTGSVDDYMWVDEDDLIDFVTSKGVKEHRLESFLSYITNGMINKTENDEEEEQEVYVSSDSESDREIYGGTAPEIEEDDDGIADLVAFSKSSTKFRDTIDTSAVGTTGKGSRKQLDLERFAQYELDDDIIDSLQQQYKIRRESKKSKKQQHQDELMEEGLNKYNLLLKYPYTLHIKDIKDEFESFLHNPARDDLSFPPLDPHGNKTLTKMAKCYNCKSATQGKGIRRYIRVSKYKRTFKYLPDYGHINAILRQRPVFNRVDQKRPKEEYIATDGNATKDRIRQRNKSGHNAYIPEGHIVGGMAPEIDHTNVGRQLLEKLGWVKGEGLGAHGNKGISEPLVATVKKSKTGLGQTRY</sequence>
<evidence type="ECO:0000250" key="1"/>
<evidence type="ECO:0000255" key="2">
    <source>
        <dbReference type="PROSITE-ProRule" id="PRU00092"/>
    </source>
</evidence>
<evidence type="ECO:0000255" key="3">
    <source>
        <dbReference type="PROSITE-ProRule" id="PRU00382"/>
    </source>
</evidence>
<evidence type="ECO:0000256" key="4">
    <source>
        <dbReference type="SAM" id="MobiDB-lite"/>
    </source>
</evidence>
<evidence type="ECO:0000305" key="5"/>
<proteinExistence type="inferred from homology"/>
<feature type="chain" id="PRO_0000324999" description="Protein SQS1">
    <location>
        <begin position="1"/>
        <end position="749"/>
    </location>
</feature>
<feature type="domain" description="R3H" evidence="3">
    <location>
        <begin position="566"/>
        <end position="629"/>
    </location>
</feature>
<feature type="domain" description="G-patch" evidence="2">
    <location>
        <begin position="702"/>
        <end position="749"/>
    </location>
</feature>
<feature type="region of interest" description="Disordered" evidence="4">
    <location>
        <begin position="1"/>
        <end position="56"/>
    </location>
</feature>
<feature type="region of interest" description="Disordered" evidence="4">
    <location>
        <begin position="153"/>
        <end position="265"/>
    </location>
</feature>
<feature type="region of interest" description="Disordered" evidence="4">
    <location>
        <begin position="289"/>
        <end position="315"/>
    </location>
</feature>
<feature type="region of interest" description="Disordered" evidence="4">
    <location>
        <begin position="327"/>
        <end position="353"/>
    </location>
</feature>
<feature type="region of interest" description="Disordered" evidence="4">
    <location>
        <begin position="441"/>
        <end position="461"/>
    </location>
</feature>
<feature type="compositionally biased region" description="Basic residues" evidence="4">
    <location>
        <begin position="1"/>
        <end position="10"/>
    </location>
</feature>
<feature type="compositionally biased region" description="Low complexity" evidence="4">
    <location>
        <begin position="11"/>
        <end position="25"/>
    </location>
</feature>
<feature type="compositionally biased region" description="Low complexity" evidence="4">
    <location>
        <begin position="36"/>
        <end position="56"/>
    </location>
</feature>
<feature type="compositionally biased region" description="Basic and acidic residues" evidence="4">
    <location>
        <begin position="165"/>
        <end position="216"/>
    </location>
</feature>
<feature type="compositionally biased region" description="Acidic residues" evidence="4">
    <location>
        <begin position="225"/>
        <end position="237"/>
    </location>
</feature>
<feature type="compositionally biased region" description="Acidic residues" evidence="4">
    <location>
        <begin position="303"/>
        <end position="315"/>
    </location>
</feature>
<feature type="compositionally biased region" description="Low complexity" evidence="4">
    <location>
        <begin position="327"/>
        <end position="338"/>
    </location>
</feature>
<feature type="compositionally biased region" description="Polar residues" evidence="4">
    <location>
        <begin position="344"/>
        <end position="353"/>
    </location>
</feature>
<comment type="function">
    <text evidence="1">May be involved in splicing.</text>
</comment>
<comment type="subcellular location">
    <subcellularLocation>
        <location evidence="1">Cytoplasm</location>
    </subcellularLocation>
    <subcellularLocation>
        <location evidence="1">Nucleus</location>
    </subcellularLocation>
</comment>
<comment type="similarity">
    <text evidence="5">Belongs to the SQS1 family.</text>
</comment>
<comment type="sequence caution" evidence="5">
    <conflict type="erroneous initiation">
        <sequence resource="EMBL-CDS" id="EDK37560"/>
    </conflict>
</comment>